<name>PEX8_PICAN</name>
<protein>
    <recommendedName>
        <fullName>Peroxisomal biogenesis factor 8</fullName>
    </recommendedName>
    <alternativeName>
        <fullName>Peroxin-8</fullName>
    </alternativeName>
    <alternativeName>
        <fullName>Peroxisomal protein PER1</fullName>
    </alternativeName>
</protein>
<feature type="chain" id="PRO_0000022041" description="Peroxisomal biogenesis factor 8">
    <location>
        <begin position="1"/>
        <end position="650"/>
    </location>
</feature>
<feature type="short sequence motif" description="Microbody targeting signal" evidence="1">
    <location>
        <begin position="648"/>
        <end position="650"/>
    </location>
</feature>
<reference key="1">
    <citation type="journal article" date="1994" name="J. Cell Biol.">
        <title>The Hansenula polymorpha PER1 gene is essential for peroxisome biogenesis and encodes a peroxisomal matrix protein with both carboxy- and amino-terminal targeting signals.</title>
        <authorList>
            <person name="Waterham H.R."/>
            <person name="Titorenko V.I."/>
            <person name="Haima P."/>
            <person name="Cregg J.M."/>
            <person name="Harder W."/>
            <person name="Veenhuis M."/>
        </authorList>
    </citation>
    <scope>NUCLEOTIDE SEQUENCE [GENOMIC DNA]</scope>
    <source>
        <strain>ATCC 34438 / CBS 4732 / DSM 70277 / JCM 3621 / NBRC 1476 / NRRL Y-5445</strain>
    </source>
</reference>
<evidence type="ECO:0000255" key="1"/>
<dbReference type="EMBL" id="Z30206">
    <property type="protein sequence ID" value="CAA82928.1"/>
    <property type="molecule type" value="Genomic_DNA"/>
</dbReference>
<dbReference type="PIR" id="A54976">
    <property type="entry name" value="A54976"/>
</dbReference>
<dbReference type="GO" id="GO:0005782">
    <property type="term" value="C:peroxisomal matrix"/>
    <property type="evidence" value="ECO:0007669"/>
    <property type="project" value="UniProtKB-SubCell"/>
</dbReference>
<dbReference type="GO" id="GO:0007031">
    <property type="term" value="P:peroxisome organization"/>
    <property type="evidence" value="ECO:0007669"/>
    <property type="project" value="UniProtKB-KW"/>
</dbReference>
<dbReference type="InterPro" id="IPR055334">
    <property type="entry name" value="PEX8-like"/>
</dbReference>
<dbReference type="PANTHER" id="PTHR39214">
    <property type="entry name" value="MICROBODY (PEROXISOME) BIOGENESIS PROTEIN PEROXIN 8 (EUROFUNG)"/>
    <property type="match status" value="1"/>
</dbReference>
<dbReference type="PANTHER" id="PTHR39214:SF1">
    <property type="entry name" value="MICROBODY (PEROXISOME) BIOGENESIS PROTEIN PEROXIN 8 (EUROFUNG)"/>
    <property type="match status" value="1"/>
</dbReference>
<proteinExistence type="predicted"/>
<organism>
    <name type="scientific">Pichia angusta</name>
    <name type="common">Yeast</name>
    <name type="synonym">Hansenula polymorpha</name>
    <dbReference type="NCBI Taxonomy" id="870730"/>
    <lineage>
        <taxon>Eukaryota</taxon>
        <taxon>Fungi</taxon>
        <taxon>Dikarya</taxon>
        <taxon>Ascomycota</taxon>
        <taxon>Saccharomycotina</taxon>
        <taxon>Pichiomycetes</taxon>
        <taxon>Pichiales</taxon>
        <taxon>Pichiaceae</taxon>
        <taxon>Ogataea</taxon>
    </lineage>
</organism>
<gene>
    <name type="primary">PEX8</name>
    <name type="synonym">PER1</name>
</gene>
<keyword id="KW-0576">Peroxisome</keyword>
<keyword id="KW-0962">Peroxisome biogenesis</keyword>
<accession>Q00925</accession>
<sequence length="650" mass="74122">MQPWYHKLGRQGRQLAEQWQTDAEPWGVATPTPLDYLFDELTAPKPSTTPDKVLSYLAYYYPKLKNENNVELLTLCFLRCPLFFNDAQLVSFSDNYRVIECFKYIMDKKFQISQPTLPFYRFYNALFGALAKVVADSACAWKVVPVAVGCLLSVDSRNDYDRYPEHFQLIATVDAKLVDMAAHTLERSMDGPLSNDLLCLNVVALSCVQDKLVDSQLLRILRVRSDILKILTELTFNSPYGLDNGRLLTKSNANTPIVVRHLNRISFLFTKLTSIHPKIVLLADDLDLILNRIQTFSESVLSIPNPSETQWSTLRVVLFAQVMMFEGIMARFFQINNHSLNSTVLPTLCRKILTTLFNFNFVVDRIGTGGFESYNFVYASCLSTLTSYDIPTAETLIKCWTSSVAFKKVDNSATERGKLLFDLQFIENVVNLVSDSLKFEFIIPIVQDLIGNAQDQAVLESAHSVMLKYFTSVDTYNEAQLVDYTNNVKHVGAQLIDYLTLSLDQFPARLSLSQVGIIVETLAKITFPDTAVHECDPELYRELLLLVYNRCLVATSEELPNVQAPPKTRHGAFTSLLIRILPLIPFDEYQSWLERTLSLAFRTVGDERTYLLDLLWDSILGTNRHYPQKGYVGIQWWYEHVNESQEKAKL</sequence>
<comment type="function">
    <text>Essential for peroxisome biogenesis. May play a role in triggering the protein import competence of individual peroxisomes. It may interact with PEX10.</text>
</comment>
<comment type="subcellular location">
    <subcellularLocation>
        <location>Peroxisome matrix</location>
    </subcellularLocation>
</comment>